<evidence type="ECO:0000255" key="1">
    <source>
        <dbReference type="HAMAP-Rule" id="MF_01325"/>
    </source>
</evidence>
<evidence type="ECO:0000305" key="2"/>
<sequence length="344" mass="38643">MGARKKRAPRRGSLGFSPRKRASRLVPRVKRWPEVDIGKPVPLAFLGYRAGMTHVFMVDDRPGRPTSGKEIFVPVTIVETPPMFVAAVRLYGYDPNRGRYSLGEAWAQPPPELELQRRISTLGSFDTDKMLKSLEERLDKAEDVRLIAASQPKLAGGLSKKKPDLLEIKVGGVSDVTKLFDYAKDVLGNLIAVNDVFEEGQLVDVIAVTKGKGFQGVIKRWGVKELPRWHKHRKGSRRIGARSHGRSTFWETPQAGQTGFHRRTEYNKRILMIDDDGYKVTPAGGFLRYGVVRSTFVMLSGSIPGTPKRPIVMRWAIRPPEWYLKLGVRKPEITYISLASKQGV</sequence>
<gene>
    <name evidence="1" type="primary">rpl3</name>
    <name type="ordered locus">APE_0227</name>
</gene>
<accession>Q9YFM2</accession>
<protein>
    <recommendedName>
        <fullName evidence="1">Large ribosomal subunit protein uL3</fullName>
    </recommendedName>
    <alternativeName>
        <fullName evidence="2">50S ribosomal protein L3</fullName>
    </alternativeName>
</protein>
<name>RL3_AERPE</name>
<keyword id="KW-1185">Reference proteome</keyword>
<keyword id="KW-0687">Ribonucleoprotein</keyword>
<keyword id="KW-0689">Ribosomal protein</keyword>
<keyword id="KW-0694">RNA-binding</keyword>
<keyword id="KW-0699">rRNA-binding</keyword>
<reference key="1">
    <citation type="journal article" date="1999" name="DNA Res.">
        <title>Complete genome sequence of an aerobic hyper-thermophilic crenarchaeon, Aeropyrum pernix K1.</title>
        <authorList>
            <person name="Kawarabayasi Y."/>
            <person name="Hino Y."/>
            <person name="Horikawa H."/>
            <person name="Yamazaki S."/>
            <person name="Haikawa Y."/>
            <person name="Jin-no K."/>
            <person name="Takahashi M."/>
            <person name="Sekine M."/>
            <person name="Baba S."/>
            <person name="Ankai A."/>
            <person name="Kosugi H."/>
            <person name="Hosoyama A."/>
            <person name="Fukui S."/>
            <person name="Nagai Y."/>
            <person name="Nishijima K."/>
            <person name="Nakazawa H."/>
            <person name="Takamiya M."/>
            <person name="Masuda S."/>
            <person name="Funahashi T."/>
            <person name="Tanaka T."/>
            <person name="Kudoh Y."/>
            <person name="Yamazaki J."/>
            <person name="Kushida N."/>
            <person name="Oguchi A."/>
            <person name="Aoki K."/>
            <person name="Kubota K."/>
            <person name="Nakamura Y."/>
            <person name="Nomura N."/>
            <person name="Sako Y."/>
            <person name="Kikuchi H."/>
        </authorList>
    </citation>
    <scope>NUCLEOTIDE SEQUENCE [LARGE SCALE GENOMIC DNA]</scope>
    <source>
        <strain>ATCC 700893 / DSM 11879 / JCM 9820 / NBRC 100138 / K1</strain>
    </source>
</reference>
<feature type="chain" id="PRO_0000077205" description="Large ribosomal subunit protein uL3">
    <location>
        <begin position="1"/>
        <end position="344"/>
    </location>
</feature>
<dbReference type="EMBL" id="BA000002">
    <property type="protein sequence ID" value="BAA79139.1"/>
    <property type="molecule type" value="Genomic_DNA"/>
</dbReference>
<dbReference type="PIR" id="A72780">
    <property type="entry name" value="A72780"/>
</dbReference>
<dbReference type="RefSeq" id="WP_010865582.1">
    <property type="nucleotide sequence ID" value="NC_000854.2"/>
</dbReference>
<dbReference type="SMR" id="Q9YFM2"/>
<dbReference type="STRING" id="272557.APE_0227"/>
<dbReference type="EnsemblBacteria" id="BAA79139">
    <property type="protein sequence ID" value="BAA79139"/>
    <property type="gene ID" value="APE_0227"/>
</dbReference>
<dbReference type="GeneID" id="1445744"/>
<dbReference type="KEGG" id="ape:APE_0227"/>
<dbReference type="PATRIC" id="fig|272557.25.peg.161"/>
<dbReference type="eggNOG" id="arCOG04070">
    <property type="taxonomic scope" value="Archaea"/>
</dbReference>
<dbReference type="Proteomes" id="UP000002518">
    <property type="component" value="Chromosome"/>
</dbReference>
<dbReference type="GO" id="GO:0022625">
    <property type="term" value="C:cytosolic large ribosomal subunit"/>
    <property type="evidence" value="ECO:0007669"/>
    <property type="project" value="TreeGrafter"/>
</dbReference>
<dbReference type="GO" id="GO:0019843">
    <property type="term" value="F:rRNA binding"/>
    <property type="evidence" value="ECO:0007669"/>
    <property type="project" value="UniProtKB-UniRule"/>
</dbReference>
<dbReference type="GO" id="GO:0003735">
    <property type="term" value="F:structural constituent of ribosome"/>
    <property type="evidence" value="ECO:0007669"/>
    <property type="project" value="InterPro"/>
</dbReference>
<dbReference type="GO" id="GO:0006412">
    <property type="term" value="P:translation"/>
    <property type="evidence" value="ECO:0007669"/>
    <property type="project" value="UniProtKB-UniRule"/>
</dbReference>
<dbReference type="Gene3D" id="3.30.1430.10">
    <property type="match status" value="1"/>
</dbReference>
<dbReference type="Gene3D" id="4.10.960.10">
    <property type="entry name" value="Ribosomal protein L3, domain 3"/>
    <property type="match status" value="1"/>
</dbReference>
<dbReference type="Gene3D" id="2.40.30.10">
    <property type="entry name" value="Translation factors"/>
    <property type="match status" value="1"/>
</dbReference>
<dbReference type="HAMAP" id="MF_01325_A">
    <property type="entry name" value="Ribosomal_uL3_A"/>
    <property type="match status" value="1"/>
</dbReference>
<dbReference type="InterPro" id="IPR045077">
    <property type="entry name" value="L3_arc_euk"/>
</dbReference>
<dbReference type="InterPro" id="IPR044892">
    <property type="entry name" value="Ribosomal_L3_dom_3_arc_sf"/>
</dbReference>
<dbReference type="InterPro" id="IPR000597">
    <property type="entry name" value="Ribosomal_uL3"/>
</dbReference>
<dbReference type="InterPro" id="IPR019928">
    <property type="entry name" value="Ribosomal_uL3_arc"/>
</dbReference>
<dbReference type="InterPro" id="IPR019926">
    <property type="entry name" value="Ribosomal_uL3_CS"/>
</dbReference>
<dbReference type="InterPro" id="IPR009000">
    <property type="entry name" value="Transl_B-barrel_sf"/>
</dbReference>
<dbReference type="NCBIfam" id="TIGR03626">
    <property type="entry name" value="L3_arch"/>
    <property type="match status" value="1"/>
</dbReference>
<dbReference type="NCBIfam" id="NF003261">
    <property type="entry name" value="PRK04231.1"/>
    <property type="match status" value="1"/>
</dbReference>
<dbReference type="PANTHER" id="PTHR11363">
    <property type="entry name" value="60S RIBOSOMAL PROTEIN L3-RELATED"/>
    <property type="match status" value="1"/>
</dbReference>
<dbReference type="PANTHER" id="PTHR11363:SF5">
    <property type="entry name" value="LARGE RIBOSOMAL SUBUNIT PROTEIN UL3"/>
    <property type="match status" value="1"/>
</dbReference>
<dbReference type="Pfam" id="PF00297">
    <property type="entry name" value="Ribosomal_L3"/>
    <property type="match status" value="1"/>
</dbReference>
<dbReference type="SUPFAM" id="SSF50447">
    <property type="entry name" value="Translation proteins"/>
    <property type="match status" value="1"/>
</dbReference>
<dbReference type="PROSITE" id="PS00474">
    <property type="entry name" value="RIBOSOMAL_L3"/>
    <property type="match status" value="1"/>
</dbReference>
<comment type="function">
    <text evidence="1">One of the primary rRNA binding proteins, it binds directly near the 3'-end of the 23S rRNA, where it nucleates assembly of the 50S subunit.</text>
</comment>
<comment type="subunit">
    <text evidence="1">Part of the 50S ribosomal subunit. Forms a cluster with proteins L14 and L24e.</text>
</comment>
<comment type="similarity">
    <text evidence="1">Belongs to the universal ribosomal protein uL3 family.</text>
</comment>
<proteinExistence type="inferred from homology"/>
<organism>
    <name type="scientific">Aeropyrum pernix (strain ATCC 700893 / DSM 11879 / JCM 9820 / NBRC 100138 / K1)</name>
    <dbReference type="NCBI Taxonomy" id="272557"/>
    <lineage>
        <taxon>Archaea</taxon>
        <taxon>Thermoproteota</taxon>
        <taxon>Thermoprotei</taxon>
        <taxon>Desulfurococcales</taxon>
        <taxon>Desulfurococcaceae</taxon>
        <taxon>Aeropyrum</taxon>
    </lineage>
</organism>